<dbReference type="EMBL" id="AP009368">
    <property type="protein sequence ID" value="BAF49976.1"/>
    <property type="molecule type" value="Genomic_DNA"/>
</dbReference>
<dbReference type="RefSeq" id="YP_001123152.1">
    <property type="nucleotide sequence ID" value="NC_009267.1"/>
</dbReference>
<dbReference type="SMR" id="A4QJW8"/>
<dbReference type="GeneID" id="4962365"/>
<dbReference type="GO" id="GO:0009507">
    <property type="term" value="C:chloroplast"/>
    <property type="evidence" value="ECO:0007669"/>
    <property type="project" value="UniProtKB-SubCell"/>
</dbReference>
<dbReference type="GO" id="GO:0005762">
    <property type="term" value="C:mitochondrial large ribosomal subunit"/>
    <property type="evidence" value="ECO:0007669"/>
    <property type="project" value="TreeGrafter"/>
</dbReference>
<dbReference type="GO" id="GO:0019843">
    <property type="term" value="F:rRNA binding"/>
    <property type="evidence" value="ECO:0007669"/>
    <property type="project" value="InterPro"/>
</dbReference>
<dbReference type="GO" id="GO:0003735">
    <property type="term" value="F:structural constituent of ribosome"/>
    <property type="evidence" value="ECO:0007669"/>
    <property type="project" value="InterPro"/>
</dbReference>
<dbReference type="GO" id="GO:0032543">
    <property type="term" value="P:mitochondrial translation"/>
    <property type="evidence" value="ECO:0007669"/>
    <property type="project" value="TreeGrafter"/>
</dbReference>
<dbReference type="CDD" id="cd01433">
    <property type="entry name" value="Ribosomal_L16_L10e"/>
    <property type="match status" value="1"/>
</dbReference>
<dbReference type="FunFam" id="3.90.1170.10:FF:000001">
    <property type="entry name" value="50S ribosomal protein L16"/>
    <property type="match status" value="1"/>
</dbReference>
<dbReference type="Gene3D" id="3.90.1170.10">
    <property type="entry name" value="Ribosomal protein L10e/L16"/>
    <property type="match status" value="1"/>
</dbReference>
<dbReference type="HAMAP" id="MF_01342">
    <property type="entry name" value="Ribosomal_uL16"/>
    <property type="match status" value="1"/>
</dbReference>
<dbReference type="InterPro" id="IPR047873">
    <property type="entry name" value="Ribosomal_uL16"/>
</dbReference>
<dbReference type="InterPro" id="IPR000114">
    <property type="entry name" value="Ribosomal_uL16_bact-type"/>
</dbReference>
<dbReference type="InterPro" id="IPR020798">
    <property type="entry name" value="Ribosomal_uL16_CS"/>
</dbReference>
<dbReference type="InterPro" id="IPR016180">
    <property type="entry name" value="Ribosomal_uL16_dom"/>
</dbReference>
<dbReference type="InterPro" id="IPR036920">
    <property type="entry name" value="Ribosomal_uL16_sf"/>
</dbReference>
<dbReference type="NCBIfam" id="TIGR01164">
    <property type="entry name" value="rplP_bact"/>
    <property type="match status" value="1"/>
</dbReference>
<dbReference type="PANTHER" id="PTHR12220">
    <property type="entry name" value="50S/60S RIBOSOMAL PROTEIN L16"/>
    <property type="match status" value="1"/>
</dbReference>
<dbReference type="PANTHER" id="PTHR12220:SF13">
    <property type="entry name" value="LARGE RIBOSOMAL SUBUNIT PROTEIN UL16M"/>
    <property type="match status" value="1"/>
</dbReference>
<dbReference type="Pfam" id="PF00252">
    <property type="entry name" value="Ribosomal_L16"/>
    <property type="match status" value="1"/>
</dbReference>
<dbReference type="PRINTS" id="PR00060">
    <property type="entry name" value="RIBOSOMALL16"/>
</dbReference>
<dbReference type="SUPFAM" id="SSF54686">
    <property type="entry name" value="Ribosomal protein L16p/L10e"/>
    <property type="match status" value="1"/>
</dbReference>
<dbReference type="PROSITE" id="PS00586">
    <property type="entry name" value="RIBOSOMAL_L16_1"/>
    <property type="match status" value="1"/>
</dbReference>
<dbReference type="PROSITE" id="PS00701">
    <property type="entry name" value="RIBOSOMAL_L16_2"/>
    <property type="match status" value="1"/>
</dbReference>
<name>RK16_OLIPU</name>
<reference key="1">
    <citation type="submission" date="2007-03" db="EMBL/GenBank/DDBJ databases">
        <title>Sequence analysis of Arabidopsis pumila JS2 chloroplast DNA.</title>
        <authorList>
            <person name="Hosouchi T."/>
            <person name="Tsuruoka H."/>
            <person name="Kotani H."/>
        </authorList>
    </citation>
    <scope>NUCLEOTIDE SEQUENCE [LARGE SCALE GENOMIC DNA]</scope>
</reference>
<sequence>MLSPKRTRFRKQHRGRLKGISSRGNRICFGRYALQTLEPAWITSRQIEAGRRAMTRNVRRGGKIWVRIFPDKPVTVRPAETRMGSGKGSPEYWVAVVKPGKILYEMGGVPENIARKAISIAASKMPIKTQFIISE</sequence>
<evidence type="ECO:0000255" key="1">
    <source>
        <dbReference type="HAMAP-Rule" id="MF_01342"/>
    </source>
</evidence>
<evidence type="ECO:0000305" key="2"/>
<geneLocation type="chloroplast"/>
<gene>
    <name evidence="1" type="primary">rpl16</name>
</gene>
<keyword id="KW-0150">Chloroplast</keyword>
<keyword id="KW-0934">Plastid</keyword>
<keyword id="KW-0687">Ribonucleoprotein</keyword>
<keyword id="KW-0689">Ribosomal protein</keyword>
<feature type="chain" id="PRO_0000354654" description="Large ribosomal subunit protein uL16c">
    <location>
        <begin position="1"/>
        <end position="135"/>
    </location>
</feature>
<comment type="subunit">
    <text evidence="1">Part of the 50S ribosomal subunit.</text>
</comment>
<comment type="subcellular location">
    <subcellularLocation>
        <location>Plastid</location>
        <location>Chloroplast</location>
    </subcellularLocation>
</comment>
<comment type="similarity">
    <text evidence="1">Belongs to the universal ribosomal protein uL16 family.</text>
</comment>
<protein>
    <recommendedName>
        <fullName evidence="1">Large ribosomal subunit protein uL16c</fullName>
    </recommendedName>
    <alternativeName>
        <fullName evidence="2">50S ribosomal protein L16, chloroplastic</fullName>
    </alternativeName>
</protein>
<accession>A4QJW8</accession>
<proteinExistence type="inferred from homology"/>
<organism>
    <name type="scientific">Olimarabidopsis pumila</name>
    <name type="common">Dwarf rocket</name>
    <name type="synonym">Arabidopsis griffithiana</name>
    <dbReference type="NCBI Taxonomy" id="74718"/>
    <lineage>
        <taxon>Eukaryota</taxon>
        <taxon>Viridiplantae</taxon>
        <taxon>Streptophyta</taxon>
        <taxon>Embryophyta</taxon>
        <taxon>Tracheophyta</taxon>
        <taxon>Spermatophyta</taxon>
        <taxon>Magnoliopsida</taxon>
        <taxon>eudicotyledons</taxon>
        <taxon>Gunneridae</taxon>
        <taxon>Pentapetalae</taxon>
        <taxon>rosids</taxon>
        <taxon>malvids</taxon>
        <taxon>Brassicales</taxon>
        <taxon>Brassicaceae</taxon>
        <taxon>Alyssopsideae</taxon>
        <taxon>Olimarabidopsis</taxon>
    </lineage>
</organism>